<protein>
    <recommendedName>
        <fullName evidence="1">4-hydroxy-2-oxovalerate aldolase 2</fullName>
        <shortName evidence="1">HOA 2</shortName>
        <ecNumber evidence="1">4.1.3.39</ecNumber>
    </recommendedName>
    <alternativeName>
        <fullName evidence="1">4-hydroxy-2-keto-pentanoic acid aldolase 2</fullName>
    </alternativeName>
    <alternativeName>
        <fullName evidence="1">4-hydroxy-2-oxopentanoate aldolase 2</fullName>
    </alternativeName>
</protein>
<accession>A8LEP8</accession>
<feature type="chain" id="PRO_0000387835" description="4-hydroxy-2-oxovalerate aldolase 2">
    <location>
        <begin position="1"/>
        <end position="336"/>
    </location>
</feature>
<feature type="domain" description="Pyruvate carboxyltransferase" evidence="1">
    <location>
        <begin position="6"/>
        <end position="258"/>
    </location>
</feature>
<feature type="active site" description="Proton acceptor" evidence="1">
    <location>
        <position position="18"/>
    </location>
</feature>
<feature type="binding site" evidence="1">
    <location>
        <begin position="14"/>
        <end position="15"/>
    </location>
    <ligand>
        <name>substrate</name>
    </ligand>
</feature>
<feature type="binding site" evidence="1">
    <location>
        <position position="15"/>
    </location>
    <ligand>
        <name>Mn(2+)</name>
        <dbReference type="ChEBI" id="CHEBI:29035"/>
    </ligand>
</feature>
<feature type="binding site" evidence="1">
    <location>
        <position position="168"/>
    </location>
    <ligand>
        <name>substrate</name>
    </ligand>
</feature>
<feature type="binding site" evidence="1">
    <location>
        <position position="197"/>
    </location>
    <ligand>
        <name>Mn(2+)</name>
        <dbReference type="ChEBI" id="CHEBI:29035"/>
    </ligand>
</feature>
<feature type="binding site" evidence="1">
    <location>
        <position position="197"/>
    </location>
    <ligand>
        <name>substrate</name>
    </ligand>
</feature>
<feature type="binding site" evidence="1">
    <location>
        <position position="199"/>
    </location>
    <ligand>
        <name>Mn(2+)</name>
        <dbReference type="ChEBI" id="CHEBI:29035"/>
    </ligand>
</feature>
<feature type="binding site" evidence="1">
    <location>
        <position position="288"/>
    </location>
    <ligand>
        <name>substrate</name>
    </ligand>
</feature>
<feature type="site" description="Transition state stabilizer" evidence="1">
    <location>
        <position position="14"/>
    </location>
</feature>
<proteinExistence type="inferred from homology"/>
<keyword id="KW-0058">Aromatic hydrocarbons catabolism</keyword>
<keyword id="KW-0456">Lyase</keyword>
<keyword id="KW-0464">Manganese</keyword>
<keyword id="KW-0479">Metal-binding</keyword>
<sequence length="336" mass="35808">MSGPNIYLQDVTLRDGMHAIRHRVDPERVGAIVAALDKAGVRAIEVTHGDGLAGSSLTYGPGSHTNWEWIEAAVTNASQATITTLLLPGVGTIAELRRAHAMGVGSVRVATHCTEADVAAQHIAAARELGMDVSGFLMMSHMAEPAELAAQAKLMESYGAHCVYVTDSGGRLTTDRVRERVRAYRDVLRPDTQIGIHAHENLSLSVANSFAAVEEGAYRVDASLAGQGAGAGNCPIEPFVAVALLLGWDLDCDLLALEDAAEDLVRPLQDRPVRVDRETLTLGFAGVYSSFLRHAEIAAETYGVDARSILIEAGRRKLVGGQEDMLVDIALAIQPK</sequence>
<comment type="catalytic activity">
    <reaction evidence="1">
        <text>(S)-4-hydroxy-2-oxopentanoate = acetaldehyde + pyruvate</text>
        <dbReference type="Rhea" id="RHEA:22624"/>
        <dbReference type="ChEBI" id="CHEBI:15343"/>
        <dbReference type="ChEBI" id="CHEBI:15361"/>
        <dbReference type="ChEBI" id="CHEBI:73143"/>
        <dbReference type="EC" id="4.1.3.39"/>
    </reaction>
</comment>
<comment type="similarity">
    <text evidence="1">Belongs to the 4-hydroxy-2-oxovalerate aldolase family.</text>
</comment>
<reference key="1">
    <citation type="journal article" date="2007" name="Genome Res.">
        <title>Genome characteristics of facultatively symbiotic Frankia sp. strains reflect host range and host plant biogeography.</title>
        <authorList>
            <person name="Normand P."/>
            <person name="Lapierre P."/>
            <person name="Tisa L.S."/>
            <person name="Gogarten J.P."/>
            <person name="Alloisio N."/>
            <person name="Bagnarol E."/>
            <person name="Bassi C.A."/>
            <person name="Berry A.M."/>
            <person name="Bickhart D.M."/>
            <person name="Choisne N."/>
            <person name="Couloux A."/>
            <person name="Cournoyer B."/>
            <person name="Cruveiller S."/>
            <person name="Daubin V."/>
            <person name="Demange N."/>
            <person name="Francino M.P."/>
            <person name="Goltsman E."/>
            <person name="Huang Y."/>
            <person name="Kopp O.R."/>
            <person name="Labarre L."/>
            <person name="Lapidus A."/>
            <person name="Lavire C."/>
            <person name="Marechal J."/>
            <person name="Martinez M."/>
            <person name="Mastronunzio J.E."/>
            <person name="Mullin B.C."/>
            <person name="Niemann J."/>
            <person name="Pujic P."/>
            <person name="Rawnsley T."/>
            <person name="Rouy Z."/>
            <person name="Schenowitz C."/>
            <person name="Sellstedt A."/>
            <person name="Tavares F."/>
            <person name="Tomkins J.P."/>
            <person name="Vallenet D."/>
            <person name="Valverde C."/>
            <person name="Wall L.G."/>
            <person name="Wang Y."/>
            <person name="Medigue C."/>
            <person name="Benson D.R."/>
        </authorList>
    </citation>
    <scope>NUCLEOTIDE SEQUENCE [LARGE SCALE GENOMIC DNA]</scope>
    <source>
        <strain>EAN1pec</strain>
    </source>
</reference>
<name>HOA2_PARS2</name>
<gene>
    <name type="ordered locus">Franean1_4743</name>
</gene>
<dbReference type="EC" id="4.1.3.39" evidence="1"/>
<dbReference type="EMBL" id="CP000820">
    <property type="protein sequence ID" value="ABW14110.1"/>
    <property type="molecule type" value="Genomic_DNA"/>
</dbReference>
<dbReference type="RefSeq" id="WP_020462232.1">
    <property type="nucleotide sequence ID" value="NC_009921.1"/>
</dbReference>
<dbReference type="SMR" id="A8LEP8"/>
<dbReference type="STRING" id="298653.Franean1_4743"/>
<dbReference type="KEGG" id="fre:Franean1_4743"/>
<dbReference type="eggNOG" id="COG0119">
    <property type="taxonomic scope" value="Bacteria"/>
</dbReference>
<dbReference type="HOGENOM" id="CLU_049173_0_0_11"/>
<dbReference type="GO" id="GO:0003852">
    <property type="term" value="F:2-isopropylmalate synthase activity"/>
    <property type="evidence" value="ECO:0007669"/>
    <property type="project" value="TreeGrafter"/>
</dbReference>
<dbReference type="GO" id="GO:0008701">
    <property type="term" value="F:4-hydroxy-2-oxovalerate aldolase activity"/>
    <property type="evidence" value="ECO:0007669"/>
    <property type="project" value="UniProtKB-UniRule"/>
</dbReference>
<dbReference type="GO" id="GO:0030145">
    <property type="term" value="F:manganese ion binding"/>
    <property type="evidence" value="ECO:0007669"/>
    <property type="project" value="UniProtKB-UniRule"/>
</dbReference>
<dbReference type="GO" id="GO:0009056">
    <property type="term" value="P:catabolic process"/>
    <property type="evidence" value="ECO:0007669"/>
    <property type="project" value="UniProtKB-KW"/>
</dbReference>
<dbReference type="GO" id="GO:0009098">
    <property type="term" value="P:L-leucine biosynthetic process"/>
    <property type="evidence" value="ECO:0007669"/>
    <property type="project" value="TreeGrafter"/>
</dbReference>
<dbReference type="CDD" id="cd07943">
    <property type="entry name" value="DRE_TIM_HOA"/>
    <property type="match status" value="1"/>
</dbReference>
<dbReference type="Gene3D" id="1.10.8.60">
    <property type="match status" value="1"/>
</dbReference>
<dbReference type="Gene3D" id="3.20.20.70">
    <property type="entry name" value="Aldolase class I"/>
    <property type="match status" value="1"/>
</dbReference>
<dbReference type="HAMAP" id="MF_01656">
    <property type="entry name" value="HOA"/>
    <property type="match status" value="1"/>
</dbReference>
<dbReference type="InterPro" id="IPR050073">
    <property type="entry name" value="2-IPM_HCS-like"/>
</dbReference>
<dbReference type="InterPro" id="IPR017629">
    <property type="entry name" value="4OH_2_O-val_aldolase"/>
</dbReference>
<dbReference type="InterPro" id="IPR013785">
    <property type="entry name" value="Aldolase_TIM"/>
</dbReference>
<dbReference type="InterPro" id="IPR012425">
    <property type="entry name" value="DmpG_comm"/>
</dbReference>
<dbReference type="InterPro" id="IPR035685">
    <property type="entry name" value="DRE_TIM_HOA"/>
</dbReference>
<dbReference type="InterPro" id="IPR000891">
    <property type="entry name" value="PYR_CT"/>
</dbReference>
<dbReference type="NCBIfam" id="TIGR03217">
    <property type="entry name" value="4OH_2_O_val_ald"/>
    <property type="match status" value="1"/>
</dbReference>
<dbReference type="NCBIfam" id="NF006049">
    <property type="entry name" value="PRK08195.1"/>
    <property type="match status" value="1"/>
</dbReference>
<dbReference type="PANTHER" id="PTHR10277:SF9">
    <property type="entry name" value="2-ISOPROPYLMALATE SYNTHASE 1, CHLOROPLASTIC-RELATED"/>
    <property type="match status" value="1"/>
</dbReference>
<dbReference type="PANTHER" id="PTHR10277">
    <property type="entry name" value="HOMOCITRATE SYNTHASE-RELATED"/>
    <property type="match status" value="1"/>
</dbReference>
<dbReference type="Pfam" id="PF07836">
    <property type="entry name" value="DmpG_comm"/>
    <property type="match status" value="1"/>
</dbReference>
<dbReference type="Pfam" id="PF00682">
    <property type="entry name" value="HMGL-like"/>
    <property type="match status" value="1"/>
</dbReference>
<dbReference type="SUPFAM" id="SSF51569">
    <property type="entry name" value="Aldolase"/>
    <property type="match status" value="1"/>
</dbReference>
<dbReference type="SUPFAM" id="SSF89000">
    <property type="entry name" value="post-HMGL domain-like"/>
    <property type="match status" value="1"/>
</dbReference>
<dbReference type="PROSITE" id="PS50991">
    <property type="entry name" value="PYR_CT"/>
    <property type="match status" value="1"/>
</dbReference>
<organism>
    <name type="scientific">Parafrankia sp. (strain EAN1pec)</name>
    <dbReference type="NCBI Taxonomy" id="298653"/>
    <lineage>
        <taxon>Bacteria</taxon>
        <taxon>Bacillati</taxon>
        <taxon>Actinomycetota</taxon>
        <taxon>Actinomycetes</taxon>
        <taxon>Frankiales</taxon>
        <taxon>Frankiaceae</taxon>
        <taxon>Parafrankia</taxon>
    </lineage>
</organism>
<evidence type="ECO:0000255" key="1">
    <source>
        <dbReference type="HAMAP-Rule" id="MF_01656"/>
    </source>
</evidence>